<sequence length="511" mass="60496">MEEFKRYLELDKSKSQQHDFLYPLLFQEYIYGLAHHNQSLTRSSSLELEKTGFDNNFSLLIVKRLITQMGRQNHLSFFTNDSNQNPFLGHNTTLYSKILLDGFVVVLEIPFSIRVISSLECKEIVKSHNLRSIHSIFPFLEDKFTHLNYVLDFLIPHFIHLEILVQTLRYWVKDASSLHLLRALIHKYHNWNNIITLKKSSFSFSKRNKRFLFFLYNFHVYEYESIFTFLRNQSSHLKSNSYRPFLDRIYFYEKRDHFLEIFTNYFQAILCSFKDPFMHYVRYQGKALLASKGVFLLINKWNSYLVNFWQCYFYTWSQPGRIQINKLSNHSLDLLGYLSSVRLTSSMVRNQMLENVFLIANASKKLNTIVPIIPLIGSLSKAKFCNPLGHPISKPVWADLSDSDIIDRFGRIYRNISHYYSGSSKKMSLYRIKYIIRLSCARTLARKHKSTVRAFLKRTGSELLEEFFMEEERIFSLTFPKISSTSTSGGLYRNPIWYLDIFCINDLANHE</sequence>
<geneLocation type="chloroplast"/>
<dbReference type="EMBL" id="AJ429293">
    <property type="protein sequence ID" value="CAD22189.1"/>
    <property type="molecule type" value="Genomic_DNA"/>
</dbReference>
<dbReference type="EMBL" id="AY647530">
    <property type="protein sequence ID" value="AAT65672.1"/>
    <property type="molecule type" value="Genomic_DNA"/>
</dbReference>
<dbReference type="RefSeq" id="YP_009309054.1">
    <property type="nucleotide sequence ID" value="NC_031428.1"/>
</dbReference>
<dbReference type="GeneID" id="29293447"/>
<dbReference type="GO" id="GO:0009507">
    <property type="term" value="C:chloroplast"/>
    <property type="evidence" value="ECO:0007669"/>
    <property type="project" value="UniProtKB-SubCell"/>
</dbReference>
<dbReference type="GO" id="GO:0003723">
    <property type="term" value="F:RNA binding"/>
    <property type="evidence" value="ECO:0007669"/>
    <property type="project" value="UniProtKB-KW"/>
</dbReference>
<dbReference type="GO" id="GO:0006397">
    <property type="term" value="P:mRNA processing"/>
    <property type="evidence" value="ECO:0007669"/>
    <property type="project" value="UniProtKB-KW"/>
</dbReference>
<dbReference type="GO" id="GO:0008380">
    <property type="term" value="P:RNA splicing"/>
    <property type="evidence" value="ECO:0007669"/>
    <property type="project" value="UniProtKB-UniRule"/>
</dbReference>
<dbReference type="GO" id="GO:0008033">
    <property type="term" value="P:tRNA processing"/>
    <property type="evidence" value="ECO:0007669"/>
    <property type="project" value="UniProtKB-KW"/>
</dbReference>
<dbReference type="HAMAP" id="MF_01390">
    <property type="entry name" value="MatK"/>
    <property type="match status" value="1"/>
</dbReference>
<dbReference type="InterPro" id="IPR024937">
    <property type="entry name" value="Domain_X"/>
</dbReference>
<dbReference type="InterPro" id="IPR002866">
    <property type="entry name" value="Maturase_MatK"/>
</dbReference>
<dbReference type="InterPro" id="IPR024942">
    <property type="entry name" value="Maturase_MatK_N"/>
</dbReference>
<dbReference type="PANTHER" id="PTHR34811">
    <property type="entry name" value="MATURASE K"/>
    <property type="match status" value="1"/>
</dbReference>
<dbReference type="PANTHER" id="PTHR34811:SF1">
    <property type="entry name" value="MATURASE K"/>
    <property type="match status" value="1"/>
</dbReference>
<dbReference type="Pfam" id="PF01348">
    <property type="entry name" value="Intron_maturas2"/>
    <property type="match status" value="1"/>
</dbReference>
<dbReference type="Pfam" id="PF01824">
    <property type="entry name" value="MatK_N"/>
    <property type="match status" value="1"/>
</dbReference>
<evidence type="ECO:0000255" key="1">
    <source>
        <dbReference type="HAMAP-Rule" id="MF_01390"/>
    </source>
</evidence>
<feature type="chain" id="PRO_0000143648" description="Maturase K">
    <location>
        <begin position="1"/>
        <end position="511"/>
    </location>
</feature>
<gene>
    <name evidence="1" type="primary">matK</name>
</gene>
<accession>Q8M924</accession>
<proteinExistence type="inferred from homology"/>
<protein>
    <recommendedName>
        <fullName evidence="1">Maturase K</fullName>
    </recommendedName>
    <alternativeName>
        <fullName evidence="1">Intron maturase</fullName>
    </alternativeName>
</protein>
<comment type="function">
    <text evidence="1">Usually encoded in the trnK tRNA gene intron. Probably assists in splicing its own and other chloroplast group II introns.</text>
</comment>
<comment type="subcellular location">
    <subcellularLocation>
        <location>Plastid</location>
        <location>Chloroplast</location>
    </subcellularLocation>
</comment>
<comment type="similarity">
    <text evidence="1">Belongs to the intron maturase 2 family. MatK subfamily.</text>
</comment>
<reference key="1">
    <citation type="journal article" date="2002" name="Mol. Phylogenet. Evol.">
        <title>Phylogenetics of asterids based on 3 coding and 3 non-coding chloroplast DNA markers and the utility of non-coding DNA at higher taxonomic levels.</title>
        <authorList>
            <person name="Bremer B."/>
            <person name="Bremer K."/>
            <person name="Heidari N."/>
            <person name="Erixon P."/>
            <person name="Olmstead R.G."/>
            <person name="Anderberg A.A."/>
            <person name="Kallersjo M."/>
            <person name="Barkhordarian E."/>
        </authorList>
    </citation>
    <scope>NUCLEOTIDE SEQUENCE [GENOMIC DNA]</scope>
</reference>
<reference key="2">
    <citation type="journal article" date="2004" name="Am. J. Bot.">
        <title>Buzz-pollinated Dodecatheon originated from within the heterostylous Primula subgenus Auriculastrum (Primulaceae): a seven-region cpDNA phylogeny and its implications for floral evolution.</title>
        <authorList>
            <person name="Mast A.R."/>
            <person name="Feller D.M.S."/>
            <person name="Kelso S."/>
            <person name="Conti E."/>
        </authorList>
        <dbReference type="AGRICOLA" id="IND43645016"/>
    </citation>
    <scope>NUCLEOTIDE SEQUENCE [GENOMIC DNA]</scope>
</reference>
<name>MATK_PRIVE</name>
<organism>
    <name type="scientific">Primula veris</name>
    <name type="common">Cowslip</name>
    <dbReference type="NCBI Taxonomy" id="170927"/>
    <lineage>
        <taxon>Eukaryota</taxon>
        <taxon>Viridiplantae</taxon>
        <taxon>Streptophyta</taxon>
        <taxon>Embryophyta</taxon>
        <taxon>Tracheophyta</taxon>
        <taxon>Spermatophyta</taxon>
        <taxon>Magnoliopsida</taxon>
        <taxon>eudicotyledons</taxon>
        <taxon>Gunneridae</taxon>
        <taxon>Pentapetalae</taxon>
        <taxon>asterids</taxon>
        <taxon>Ericales</taxon>
        <taxon>Primulaceae</taxon>
        <taxon>Primula</taxon>
    </lineage>
</organism>
<keyword id="KW-0150">Chloroplast</keyword>
<keyword id="KW-0507">mRNA processing</keyword>
<keyword id="KW-0934">Plastid</keyword>
<keyword id="KW-0694">RNA-binding</keyword>
<keyword id="KW-0819">tRNA processing</keyword>